<evidence type="ECO:0000250" key="1"/>
<evidence type="ECO:0000250" key="2">
    <source>
        <dbReference type="UniProtKB" id="P08668"/>
    </source>
</evidence>
<evidence type="ECO:0000250" key="3">
    <source>
        <dbReference type="UniProtKB" id="P0DTJ1"/>
    </source>
</evidence>
<evidence type="ECO:0000250" key="4">
    <source>
        <dbReference type="UniProtKB" id="P27312"/>
    </source>
</evidence>
<evidence type="ECO:0000250" key="5">
    <source>
        <dbReference type="UniProtKB" id="P41266"/>
    </source>
</evidence>
<evidence type="ECO:0000250" key="6">
    <source>
        <dbReference type="UniProtKB" id="Q9E006"/>
    </source>
</evidence>
<evidence type="ECO:0000255" key="7"/>
<evidence type="ECO:0000255" key="8">
    <source>
        <dbReference type="PROSITE-ProRule" id="PRU00379"/>
    </source>
</evidence>
<evidence type="ECO:0000305" key="9"/>
<dbReference type="EMBL" id="L08754">
    <property type="protein sequence ID" value="AAC37847.1"/>
    <property type="molecule type" value="Unassigned_DNA"/>
</dbReference>
<dbReference type="SMR" id="P41265"/>
<dbReference type="GlyCosmos" id="P41265">
    <property type="glycosylation" value="4 sites, No reported glycans"/>
</dbReference>
<dbReference type="GO" id="GO:0044167">
    <property type="term" value="C:host cell endoplasmic reticulum membrane"/>
    <property type="evidence" value="ECO:0007669"/>
    <property type="project" value="UniProtKB-SubCell"/>
</dbReference>
<dbReference type="GO" id="GO:0044178">
    <property type="term" value="C:host cell Golgi membrane"/>
    <property type="evidence" value="ECO:0007669"/>
    <property type="project" value="UniProtKB-SubCell"/>
</dbReference>
<dbReference type="GO" id="GO:0033650">
    <property type="term" value="C:host cell mitochondrion"/>
    <property type="evidence" value="ECO:0007669"/>
    <property type="project" value="UniProtKB-SubCell"/>
</dbReference>
<dbReference type="GO" id="GO:0044228">
    <property type="term" value="C:host cell surface"/>
    <property type="evidence" value="ECO:0007669"/>
    <property type="project" value="UniProtKB-SubCell"/>
</dbReference>
<dbReference type="GO" id="GO:0016020">
    <property type="term" value="C:membrane"/>
    <property type="evidence" value="ECO:0007669"/>
    <property type="project" value="UniProtKB-KW"/>
</dbReference>
<dbReference type="GO" id="GO:0055036">
    <property type="term" value="C:virion membrane"/>
    <property type="evidence" value="ECO:0007669"/>
    <property type="project" value="UniProtKB-SubCell"/>
</dbReference>
<dbReference type="GO" id="GO:0008270">
    <property type="term" value="F:zinc ion binding"/>
    <property type="evidence" value="ECO:0007669"/>
    <property type="project" value="UniProtKB-KW"/>
</dbReference>
<dbReference type="GO" id="GO:0039654">
    <property type="term" value="P:fusion of virus membrane with host endosome membrane"/>
    <property type="evidence" value="ECO:0007669"/>
    <property type="project" value="UniProtKB-KW"/>
</dbReference>
<dbReference type="GO" id="GO:0007165">
    <property type="term" value="P:signal transduction"/>
    <property type="evidence" value="ECO:0007669"/>
    <property type="project" value="InterPro"/>
</dbReference>
<dbReference type="GO" id="GO:0046718">
    <property type="term" value="P:symbiont entry into host cell"/>
    <property type="evidence" value="ECO:0007669"/>
    <property type="project" value="UniProtKB-KW"/>
</dbReference>
<dbReference type="GO" id="GO:0052170">
    <property type="term" value="P:symbiont-mediated suppression of host innate immune response"/>
    <property type="evidence" value="ECO:0007669"/>
    <property type="project" value="UniProtKB-KW"/>
</dbReference>
<dbReference type="GO" id="GO:0039527">
    <property type="term" value="P:symbiont-mediated suppression of host TRAF-mediated signal transduction"/>
    <property type="evidence" value="ECO:0007669"/>
    <property type="project" value="UniProtKB-KW"/>
</dbReference>
<dbReference type="GO" id="GO:0019062">
    <property type="term" value="P:virion attachment to host cell"/>
    <property type="evidence" value="ECO:0007669"/>
    <property type="project" value="UniProtKB-KW"/>
</dbReference>
<dbReference type="Gene3D" id="1.10.8.1320">
    <property type="match status" value="1"/>
</dbReference>
<dbReference type="InterPro" id="IPR016402">
    <property type="entry name" value="Envelope_glycoprot_Hantavirus"/>
</dbReference>
<dbReference type="InterPro" id="IPR048791">
    <property type="entry name" value="Gc_C_bunya"/>
</dbReference>
<dbReference type="InterPro" id="IPR048790">
    <property type="entry name" value="Gn-B_hanta"/>
</dbReference>
<dbReference type="InterPro" id="IPR002532">
    <property type="entry name" value="Hanta_Gc_N"/>
</dbReference>
<dbReference type="InterPro" id="IPR002534">
    <property type="entry name" value="Hanta_Gn-H"/>
</dbReference>
<dbReference type="InterPro" id="IPR012316">
    <property type="entry name" value="ITAM_motif_hantavir-typ"/>
</dbReference>
<dbReference type="Pfam" id="PF20682">
    <property type="entry name" value="Hanta_Gc_C"/>
    <property type="match status" value="1"/>
</dbReference>
<dbReference type="Pfam" id="PF01561">
    <property type="entry name" value="Hanta_Gc_N"/>
    <property type="match status" value="1"/>
</dbReference>
<dbReference type="Pfam" id="PF20679">
    <property type="entry name" value="Hanta_Gn-B"/>
    <property type="match status" value="1"/>
</dbReference>
<dbReference type="Pfam" id="PF01567">
    <property type="entry name" value="Hanta_Gn-H"/>
    <property type="match status" value="1"/>
</dbReference>
<dbReference type="Pfam" id="PF10538">
    <property type="entry name" value="ITAM_Cys-rich"/>
    <property type="match status" value="1"/>
</dbReference>
<dbReference type="PIRSF" id="PIRSF003945">
    <property type="entry name" value="M_poly_HantaV"/>
    <property type="match status" value="1"/>
</dbReference>
<dbReference type="PROSITE" id="PS51056">
    <property type="entry name" value="ITAM_2"/>
    <property type="match status" value="1"/>
</dbReference>
<organism>
    <name type="scientific">Puumala virus (strain K27)</name>
    <dbReference type="NCBI Taxonomy" id="39000"/>
    <lineage>
        <taxon>Viruses</taxon>
        <taxon>Riboviria</taxon>
        <taxon>Orthornavirae</taxon>
        <taxon>Negarnaviricota</taxon>
        <taxon>Polyploviricotina</taxon>
        <taxon>Ellioviricetes</taxon>
        <taxon>Bunyavirales</taxon>
        <taxon>Hantaviridae</taxon>
        <taxon>Mammantavirinae</taxon>
        <taxon>Orthohantavirus</taxon>
        <taxon>Orthohantavirus puumalaense</taxon>
    </lineage>
</organism>
<gene>
    <name type="primary">GP</name>
</gene>
<comment type="function">
    <molecule>Glycoprotein N</molecule>
    <text evidence="2 4">Forms homotetramers with glycoprotein C at the surface of the virion (By similarity). Attaches the virion to host cell receptors including integrin ITGAV/ITGB3 (By similarity). This attachment induces virion internalization predominantly through clathrin-dependent endocytosis (By similarity). Mediates the assembly and budding of infectious virus particles through its interaction with the nucleocapsid protein and the viral genome (By similarity). May dysregulate normal immune and endothelial cell responses through an ITAM motif (By similarity). Translocates to mitochondria, binds to host TUFM and recruits MAP1LC3B (By similarity). These interactions induce mitochondrial autophagy and therefore destruction of host MAVS leading to inhibition of type I interferon (IFN) responses (By similarity). Concomitant breakdown of glycoprotein N is apparently prevented by the nucleoprotein that may inhibit Gn-stimulated autophagosome-lysosome fusion (By similarity). Interacts with the viral genomic RNA (By similarity).</text>
</comment>
<comment type="function">
    <molecule>Glycoprotein C</molecule>
    <text evidence="2">Forms homotetramers with glycoprotein N at the surface of the virion. Attaches the virion to host cell receptors including integrin ITGAV/ITGB3. This attachment induces virion internalization predominantly through clathrin-dependent endocytosis. Class II fusion protein that promotes fusion of viral membrane with host endosomal membrane after endocytosis of the virion.</text>
</comment>
<comment type="subunit">
    <molecule>Glycoprotein N</molecule>
    <text evidence="2 3">Homodimer (By similarity). Homotetramer; forms heterotetrameric Gn-Gc spikes in the pre-fusion conformation (By similarity). Interacts (via C-terminus) with the nucleoprotein (By similarity). Interacts with host TUFM; this interaction contributes to the virus-induced degradation of mitochondria by autophagy, which leads to degradation of host MAVS and inhibition of type I interferon (IFN) responses (By similarity). Interacts with host MAP1LC3B; this interaction contributes to the virus-induced degradation of mitochondria by autophagy, which leads to degradation of host MAVS and inhibition of type I interferon (IFN) responses (By similarity).</text>
</comment>
<comment type="subunit">
    <molecule>Glycoprotein C</molecule>
    <text evidence="2 4 5">Homodimer. Homotetramer; forms heterotetrameric Gn-Gc spikes in the pre-fusion conformation (By similarity). Homotrimer; forms homotrimer in the post-fusion conformation at acidic pH (By similarity). Interacts (via C-terminus) with the nucleoprotein (By similarity).</text>
</comment>
<comment type="subcellular location">
    <molecule>Glycoprotein N</molecule>
    <subcellularLocation>
        <location evidence="2">Virion membrane</location>
        <topology evidence="9">Multi-pass membrane protein</topology>
    </subcellularLocation>
    <subcellularLocation>
        <location evidence="2">Host cell surface</location>
    </subcellularLocation>
    <subcellularLocation>
        <location evidence="2">Host Golgi apparatus membrane</location>
        <topology evidence="2">Multi-pass membrane protein</topology>
    </subcellularLocation>
    <subcellularLocation>
        <location evidence="2">Host endoplasmic reticulum membrane</location>
        <topology evidence="2">Multi-pass membrane protein</topology>
    </subcellularLocation>
    <subcellularLocation>
        <location evidence="2">Host mitochondrion</location>
    </subcellularLocation>
    <text evidence="4">Interaction between glycoprotein N and glycoprotein C is essential for proper targeting of glycoprotein N to the host Golgi complex, where virion budding occurs.</text>
</comment>
<comment type="subcellular location">
    <molecule>Glycoprotein C</molecule>
    <subcellularLocation>
        <location evidence="2">Virion membrane</location>
        <topology evidence="9">Single-pass type I membrane protein</topology>
    </subcellularLocation>
    <subcellularLocation>
        <location evidence="2">Host cell surface</location>
    </subcellularLocation>
    <subcellularLocation>
        <location evidence="2">Host Golgi apparatus membrane</location>
        <topology evidence="2">Single-pass type I membrane protein</topology>
    </subcellularLocation>
    <subcellularLocation>
        <location evidence="2">Host endoplasmic reticulum membrane</location>
        <topology evidence="2">Single-pass type I membrane protein</topology>
    </subcellularLocation>
    <text evidence="2 9">Budding probably takes place at the host Golgi (Probable). Glycoprotein C cytoplasmic tail is important for efficient Golgi localization (By similarity).</text>
</comment>
<comment type="domain">
    <molecule>Glycoprotein N</molecule>
    <text evidence="2 3 4 6">The YxxL motif at the C-terminus is indispensable for the interaction with MAP1LC3B and for the Gn-mediated induction of mitochondrial autophagy (By similarity). The cytoplasmic tail is involved in the inhibition of the host innate immune response (By similarity). The C-terminus of the cytoplasmic tail is involved in binding to the viral genome and the nucleocapsid (By similarity). Contains 2 contiguous zinc-fingers (By similarity).</text>
</comment>
<comment type="domain">
    <molecule>Glycoprotein C</molecule>
    <text evidence="4">The C-terminus is necessary for proper localization in the Golgi (By similarity). The cytoplasmic tail is involved in binding to the nucleocapsid (By similarity).</text>
</comment>
<comment type="PTM">
    <molecule>Envelopment polyprotein</molecule>
    <text evidence="2">Envelope polyprotein precursor is quickly cleaved in vivo just after synthesis, presumably by host signal peptidase.</text>
</comment>
<comment type="similarity">
    <text evidence="9">Belongs to the hantavirus envelope glycoprotein family.</text>
</comment>
<organismHost>
    <name type="scientific">Homo sapiens</name>
    <name type="common">Human</name>
    <dbReference type="NCBI Taxonomy" id="9606"/>
</organismHost>
<organismHost>
    <name type="scientific">Myodes glareolus</name>
    <name type="common">Bank vole</name>
    <name type="synonym">Clethrionomys glareolus</name>
    <dbReference type="NCBI Taxonomy" id="447135"/>
</organismHost>
<sequence>MGELSPVCLYLLLQGLLLCNTGAARNLNELKMECPHTIRLGQGLVVGSVELPSLPIQQVETLKLESSCNFDLHTSTAGQQSFTKWTWEIKGDLAENTQASSTSFQTKSSEVNLRGLCLIPTLVVETAARMRKTIACYDLSCNQTVCQPTVYLMGPIQTCITTKSCLLSLGDQRIQVNYEKTYCVSGQLVEGICFNPIHTMALSQPSHTYDIMTMMVRCFLVIKKVTSGDSMKIEKNFETLVQKNGCTANNFQGYYICLIGSSSEPLYVPALDDYRSAEVLSRMAFAPHGEDHDIEKNAVSAMRIAGKVTGKAPSTESSDTVQGIAFSGSPLYTSTGVLTSKDDPVYIWAPGIIMEGNHSICEKKTLPLTWTGFISLPGEIEKTTQCTVFCTLAGPGADCEAYSETGIFNISSPTCSINRVQRFRGSEQQIKFVCQRVDMDITVYCNGMKKVILTKTLVIGQCIYTFTSIFSLIPGVAHSLAVELCVPGLHGWATMLLLLTLCFGWVLIPTITMILLKILIAFAYLCSKYNTDSKFRILIEKVKREYQKTMGSMVCEVCQYECETAKELESHRKSCSIGSCPYCLNPSEATTSALQAHFKVCKLTSRFQENLRKSLTVYEPMQGCYRTLSLFRYRSRFFVGLVWCVLLVLELIVWAASAETQNLNAGWTDTAHGSGIIPMKTDLELDFSLPSSASYTYRRQLQNPANEQEKIPFHLQLSKQVIHAEIQHLGHWMDATFNLKTAFHCYGSCEKYAYPWQTAGCFIEKDYEYETGWGCNPPDCPGVGTGCTACGVYLDKLKSVGKVFKIVSLRYTRKVCIQLGTEQTCKTVDSNDCLITTSVKVCLIGTISKFQPSDTLLFLGPLQQGGLIFKQWCTTTCQFGDPGDIMSTPTGMKCPELNGSFRKKCAFATTPVCQFDGNTISGYKRMIATKDSFQSFNVTEPHISTSALEWIDPDSSLRDHINVIVSRDLSFQDLSETPCQIDLATASIDGAWGSGVGFNLVCTVSLTECSAFLTSIKACDAAMCYGSTTANLVRGQNTIHIVGKGGHSGSKFMCCHDTKCSSTGLVAAAPHLDRVTGYNQADSDKIFDDGAPECGMSCWFKKSGEWILGVLNGNWMVVAVLVVLLILSILLFTLCCPRRPSYRKEHKP</sequence>
<proteinExistence type="inferred from homology"/>
<protein>
    <recommendedName>
        <fullName>Envelopment polyprotein</fullName>
    </recommendedName>
    <alternativeName>
        <fullName>M polyprotein</fullName>
    </alternativeName>
    <component>
        <recommendedName>
            <fullName evidence="2">Glycoprotein N</fullName>
            <shortName>Gn</shortName>
        </recommendedName>
        <alternativeName>
            <fullName>Glycoprotein G1</fullName>
        </alternativeName>
    </component>
    <component>
        <recommendedName>
            <fullName evidence="2">Glycoprotein C</fullName>
            <shortName>Gc</shortName>
        </recommendedName>
        <alternativeName>
            <fullName>Glycoprotein G2</fullName>
        </alternativeName>
    </component>
</protein>
<feature type="signal peptide" evidence="7">
    <location>
        <begin position="1"/>
        <end position="23"/>
    </location>
</feature>
<feature type="chain" id="PRO_0000036825" description="Envelopment polyprotein">
    <location>
        <begin position="24"/>
        <end position="1148"/>
    </location>
</feature>
<feature type="chain" id="PRO_0000036826" description="Glycoprotein N" evidence="1">
    <location>
        <begin position="24"/>
        <end position="658"/>
    </location>
</feature>
<feature type="chain" id="PRO_0000036827" description="Glycoprotein C" evidence="1">
    <location>
        <begin position="659"/>
        <end position="1148"/>
    </location>
</feature>
<feature type="topological domain" description="Lumenal" evidence="7">
    <location>
        <begin position="24"/>
        <end position="495"/>
    </location>
</feature>
<feature type="transmembrane region" description="Helical" evidence="7">
    <location>
        <begin position="496"/>
        <end position="516"/>
    </location>
</feature>
<feature type="topological domain" description="Cytoplasmic" evidence="7">
    <location>
        <begin position="517"/>
        <end position="637"/>
    </location>
</feature>
<feature type="transmembrane region" description="Helical" evidence="7">
    <location>
        <begin position="638"/>
        <end position="658"/>
    </location>
</feature>
<feature type="topological domain" description="Lumenal" evidence="7">
    <location>
        <begin position="659"/>
        <end position="1114"/>
    </location>
</feature>
<feature type="transmembrane region" description="Helical" evidence="7">
    <location>
        <begin position="1115"/>
        <end position="1135"/>
    </location>
</feature>
<feature type="topological domain" description="Cytoplasmic" evidence="7">
    <location>
        <begin position="1136"/>
        <end position="1148"/>
    </location>
</feature>
<feature type="domain" description="ITAM" evidence="8">
    <location>
        <begin position="621"/>
        <end position="644"/>
    </location>
</feature>
<feature type="zinc finger region" description="CCHC-type 1" evidence="6">
    <location>
        <begin position="555"/>
        <end position="575"/>
    </location>
</feature>
<feature type="zinc finger region" description="CCHC-type 2" evidence="6">
    <location>
        <begin position="580"/>
        <end position="601"/>
    </location>
</feature>
<feature type="region of interest" description="Binding to the ribonucleoprotein" evidence="6">
    <location>
        <begin position="526"/>
        <end position="543"/>
    </location>
</feature>
<feature type="region of interest" description="Binding to the ribonucleoprotein" evidence="4">
    <location>
        <begin position="598"/>
        <end position="615"/>
    </location>
</feature>
<feature type="region of interest" description="Binding to the ribonucleoprotein" evidence="6">
    <location>
        <begin position="602"/>
        <end position="613"/>
    </location>
</feature>
<feature type="region of interest" description="Binding to the ribonucleoprotein" evidence="4">
    <location>
        <begin position="621"/>
        <end position="635"/>
    </location>
</feature>
<feature type="region of interest" description="Fusion loop" evidence="5">
    <location>
        <begin position="767"/>
        <end position="787"/>
    </location>
</feature>
<feature type="region of interest" description="Binding to the ribonucleoprotein" evidence="4">
    <location>
        <begin position="1131"/>
        <end position="1148"/>
    </location>
</feature>
<feature type="region of interest" description="Binding to the ribonucleoprotein" evidence="4">
    <location>
        <begin position="1131"/>
        <end position="1143"/>
    </location>
</feature>
<feature type="short sequence motif" description="YxxL" evidence="2">
    <location>
        <begin position="625"/>
        <end position="628"/>
    </location>
</feature>
<feature type="site" description="Cleavage; by host signal peptidase" evidence="2">
    <location>
        <begin position="658"/>
        <end position="659"/>
    </location>
</feature>
<feature type="glycosylation site" description="N-linked (GlcNAc...) asparagine; by host" evidence="7">
    <location>
        <position position="142"/>
    </location>
</feature>
<feature type="glycosylation site" description="N-linked (GlcNAc...) asparagine; by host" evidence="7">
    <location>
        <position position="357"/>
    </location>
</feature>
<feature type="glycosylation site" description="N-linked (GlcNAc...) asparagine; by host" evidence="7">
    <location>
        <position position="409"/>
    </location>
</feature>
<feature type="glycosylation site" description="N-linked (GlcNAc...) asparagine; by host" evidence="5">
    <location>
        <position position="937"/>
    </location>
</feature>
<feature type="disulfide bond" evidence="6">
    <location>
        <begin position="34"/>
        <end position="159"/>
    </location>
</feature>
<feature type="disulfide bond" evidence="6">
    <location>
        <begin position="68"/>
        <end position="165"/>
    </location>
</feature>
<feature type="disulfide bond" evidence="6">
    <location>
        <begin position="117"/>
        <end position="136"/>
    </location>
</feature>
<feature type="disulfide bond" evidence="6">
    <location>
        <begin position="141"/>
        <end position="146"/>
    </location>
</feature>
<feature type="disulfide bond" evidence="6">
    <location>
        <begin position="183"/>
        <end position="193"/>
    </location>
</feature>
<feature type="disulfide bond" evidence="6">
    <location>
        <begin position="218"/>
        <end position="257"/>
    </location>
</feature>
<feature type="disulfide bond" evidence="6">
    <location>
        <begin position="386"/>
        <end position="445"/>
    </location>
</feature>
<feature type="disulfide bond" evidence="6">
    <location>
        <begin position="390"/>
        <end position="399"/>
    </location>
</feature>
<feature type="disulfide bond" evidence="6">
    <location>
        <begin position="415"/>
        <end position="434"/>
    </location>
</feature>
<feature type="disulfide bond" evidence="6">
    <location>
        <begin position="462"/>
        <end position="485"/>
    </location>
</feature>
<feature type="disulfide bond" evidence="2">
    <location>
        <begin position="745"/>
        <end position="780"/>
    </location>
</feature>
<feature type="disulfide bond" evidence="2">
    <location>
        <begin position="749"/>
        <end position="787"/>
    </location>
</feature>
<feature type="disulfide bond" evidence="2">
    <location>
        <begin position="761"/>
        <end position="894"/>
    </location>
</feature>
<feature type="disulfide bond" evidence="2">
    <location>
        <begin position="775"/>
        <end position="905"/>
    </location>
</feature>
<feature type="disulfide bond" evidence="2">
    <location>
        <begin position="790"/>
        <end position="913"/>
    </location>
</feature>
<feature type="disulfide bond" evidence="2">
    <location>
        <begin position="816"/>
        <end position="825"/>
    </location>
</feature>
<feature type="disulfide bond" evidence="2">
    <location>
        <begin position="833"/>
        <end position="842"/>
    </location>
</feature>
<feature type="disulfide bond" evidence="2">
    <location>
        <begin position="873"/>
        <end position="877"/>
    </location>
</feature>
<feature type="disulfide bond" evidence="2">
    <location>
        <begin position="979"/>
        <end position="1009"/>
    </location>
</feature>
<feature type="disulfide bond" evidence="2">
    <location>
        <begin position="1002"/>
        <end position="1054"/>
    </location>
</feature>
<feature type="disulfide bond" evidence="2">
    <location>
        <begin position="1019"/>
        <end position="1024"/>
    </location>
</feature>
<feature type="disulfide bond" evidence="2">
    <location>
        <begin position="1055"/>
        <end position="1060"/>
    </location>
</feature>
<feature type="disulfide bond" evidence="6">
    <location>
        <begin position="1094"/>
        <end position="1098"/>
    </location>
</feature>
<name>GP_PUUMK</name>
<accession>P41265</accession>
<keyword id="KW-1015">Disulfide bond</keyword>
<keyword id="KW-1170">Fusion of virus membrane with host endosomal membrane</keyword>
<keyword id="KW-1168">Fusion of virus membrane with host membrane</keyword>
<keyword id="KW-0325">Glycoprotein</keyword>
<keyword id="KW-1038">Host endoplasmic reticulum</keyword>
<keyword id="KW-1040">Host Golgi apparatus</keyword>
<keyword id="KW-1043">Host membrane</keyword>
<keyword id="KW-1045">Host mitochondrion</keyword>
<keyword id="KW-0945">Host-virus interaction</keyword>
<keyword id="KW-1090">Inhibition of host innate immune response by virus</keyword>
<keyword id="KW-1113">Inhibition of host RLR pathway by virus</keyword>
<keyword id="KW-1110">Inhibition of host TRAFs by virus</keyword>
<keyword id="KW-0472">Membrane</keyword>
<keyword id="KW-0479">Metal-binding</keyword>
<keyword id="KW-0597">Phosphoprotein</keyword>
<keyword id="KW-0677">Repeat</keyword>
<keyword id="KW-0732">Signal</keyword>
<keyword id="KW-0812">Transmembrane</keyword>
<keyword id="KW-1133">Transmembrane helix</keyword>
<keyword id="KW-1161">Viral attachment to host cell</keyword>
<keyword id="KW-0899">Viral immunoevasion</keyword>
<keyword id="KW-1162">Viral penetration into host cytoplasm</keyword>
<keyword id="KW-0946">Virion</keyword>
<keyword id="KW-1160">Virus entry into host cell</keyword>
<keyword id="KW-0862">Zinc</keyword>
<keyword id="KW-0863">Zinc-finger</keyword>
<reference key="1">
    <citation type="journal article" date="1993" name="Virus Res.">
        <title>Nucleotide and deduced amino acid sequences of the M and S genome segments of two Puumala virus isolates from Russia.</title>
        <authorList>
            <person name="Xiao S.Y."/>
            <person name="Spik K.W."/>
            <person name="Li D."/>
            <person name="Schmaljohn C.S."/>
        </authorList>
    </citation>
    <scope>NUCLEOTIDE SEQUENCE</scope>
</reference>
<reference key="2">
    <citation type="journal article" date="2014" name="Viruses">
        <title>Hantavirus Gn and Gc envelope glycoproteins: key structural units for virus cell entry and virus assembly.</title>
        <authorList>
            <person name="Cifuentes-Munoz N."/>
            <person name="Salazar-Quiroz N."/>
            <person name="Tischler N.D."/>
        </authorList>
    </citation>
    <scope>REVIEW</scope>
</reference>